<proteinExistence type="evidence at protein level"/>
<protein>
    <recommendedName>
        <fullName evidence="14">Palmitoyltransferase ZDHHC6</fullName>
        <ecNumber evidence="15">2.3.1.225</ecNumber>
    </recommendedName>
    <alternativeName>
        <fullName evidence="14">Stearoyltransferase ZDHHC6</fullName>
        <ecNumber evidence="16">2.3.1.-</ecNumber>
    </alternativeName>
    <alternativeName>
        <fullName evidence="13">Transmembrane protein H4</fullName>
    </alternativeName>
    <alternativeName>
        <fullName evidence="12">Zinc finger DHHC domain-containing protein 6</fullName>
        <shortName evidence="12">DHHC-6</shortName>
    </alternativeName>
    <alternativeName>
        <fullName>Zinc finger protein 376</fullName>
    </alternativeName>
</protein>
<evidence type="ECO:0000250" key="1">
    <source>
        <dbReference type="UniProtKB" id="Q8IUH5"/>
    </source>
</evidence>
<evidence type="ECO:0000255" key="2"/>
<evidence type="ECO:0000255" key="3">
    <source>
        <dbReference type="PROSITE-ProRule" id="PRU00067"/>
    </source>
</evidence>
<evidence type="ECO:0000255" key="4">
    <source>
        <dbReference type="PROSITE-ProRule" id="PRU00192"/>
    </source>
</evidence>
<evidence type="ECO:0000269" key="5">
    <source>
    </source>
</evidence>
<evidence type="ECO:0000269" key="6">
    <source>
    </source>
</evidence>
<evidence type="ECO:0000269" key="7">
    <source>
    </source>
</evidence>
<evidence type="ECO:0000269" key="8">
    <source>
    </source>
</evidence>
<evidence type="ECO:0000269" key="9">
    <source>
    </source>
</evidence>
<evidence type="ECO:0000269" key="10">
    <source>
    </source>
</evidence>
<evidence type="ECO:0000303" key="11">
    <source>
    </source>
</evidence>
<evidence type="ECO:0000303" key="12">
    <source>
    </source>
</evidence>
<evidence type="ECO:0000303" key="13">
    <source ref="1"/>
</evidence>
<evidence type="ECO:0000305" key="14"/>
<evidence type="ECO:0000305" key="15">
    <source>
    </source>
</evidence>
<evidence type="ECO:0000305" key="16">
    <source>
    </source>
</evidence>
<evidence type="ECO:0000312" key="17">
    <source>
        <dbReference type="HGNC" id="HGNC:19160"/>
    </source>
</evidence>
<comment type="function">
    <text evidence="6 7 8 9 10">Endoplasmic reticulum palmitoyl acyltransferase that mediates palmitoylation of proteins such as AMFR, CALX, ITPR1 and TFRC (PubMed:22314232, PubMed:22728137, PubMed:25368151, PubMed:28826475). Palmitoylates calnexin (CALX), which is required for its association with the ribosome-translocon complex and efficient folding of glycosylated proteins (PubMed:22314232). Mediates palmitoylation of AMFR, promoting AMFR distribution to the peripheral endoplasmic reticulum (PubMed:22728137). Together with SELENOK, palmitoylates ITPR1 in immune cells, leading to regulate ITPR1 stability and function (PubMed:25368151). Stearoyltransferase that mediates stearoylation of TFRC to inhibit TFRC-mediated activation of the JNK pathway and mitochondrial fragmentation (PubMed:26214738).</text>
</comment>
<comment type="catalytic activity">
    <reaction evidence="15">
        <text>L-cysteinyl-[protein] + hexadecanoyl-CoA = S-hexadecanoyl-L-cysteinyl-[protein] + CoA</text>
        <dbReference type="Rhea" id="RHEA:36683"/>
        <dbReference type="Rhea" id="RHEA-COMP:10131"/>
        <dbReference type="Rhea" id="RHEA-COMP:11032"/>
        <dbReference type="ChEBI" id="CHEBI:29950"/>
        <dbReference type="ChEBI" id="CHEBI:57287"/>
        <dbReference type="ChEBI" id="CHEBI:57379"/>
        <dbReference type="ChEBI" id="CHEBI:74151"/>
        <dbReference type="EC" id="2.3.1.225"/>
    </reaction>
    <physiologicalReaction direction="left-to-right" evidence="15">
        <dbReference type="Rhea" id="RHEA:36684"/>
    </physiologicalReaction>
</comment>
<comment type="catalytic activity">
    <reaction evidence="16">
        <text>L-cysteinyl-[protein] + octadecanoyl-CoA = S-octadecanoyl-L-cysteinyl-[protein] + CoA</text>
        <dbReference type="Rhea" id="RHEA:59740"/>
        <dbReference type="Rhea" id="RHEA-COMP:10131"/>
        <dbReference type="Rhea" id="RHEA-COMP:15434"/>
        <dbReference type="ChEBI" id="CHEBI:29950"/>
        <dbReference type="ChEBI" id="CHEBI:57287"/>
        <dbReference type="ChEBI" id="CHEBI:57394"/>
        <dbReference type="ChEBI" id="CHEBI:143200"/>
    </reaction>
    <physiologicalReaction direction="left-to-right" evidence="16">
        <dbReference type="Rhea" id="RHEA:59741"/>
    </physiologicalReaction>
</comment>
<comment type="subunit">
    <text evidence="8 10">Homooligomerizes (PubMed:28826475). Interacts with SELENOK (PubMed:25368151).</text>
</comment>
<comment type="subcellular location">
    <subcellularLocation>
        <location evidence="5 6 10">Endoplasmic reticulum membrane</location>
        <topology evidence="2">Multi-pass membrane protein</topology>
    </subcellularLocation>
    <text evidence="10">When not palmitoylated, accumulates to dot-like structures in the endoplasmic reticulum (PubMed:28826475).</text>
</comment>
<comment type="alternative products">
    <event type="alternative splicing"/>
    <isoform>
        <id>Q9H6R6-1</id>
        <name>1</name>
        <sequence type="displayed"/>
    </isoform>
    <isoform>
        <id>Q9H6R6-2</id>
        <name>2</name>
        <sequence type="described" ref="VSP_006938"/>
    </isoform>
</comment>
<comment type="domain">
    <text evidence="1">The DHHC domain is required for palmitoyltransferase activity.</text>
</comment>
<comment type="domain">
    <text evidence="5">The C-terminal di-lysine motif confers endoplasmic reticulum localization.</text>
</comment>
<comment type="PTM">
    <text evidence="10">Palmitoylated at 3 different sites by ZDHHC16 (PubMed:28826475). The combination of the different palmitoylation events strongly affects the quaternary assembly of ZDHHC6, its localization, stability and function (PubMed:28826475). Palmitoylation at Cys-328 accelerates the turnover of ZDHHC6 (PubMed:28826475). Depalmitoylated by LYPLA2 (PubMed:28826475).</text>
</comment>
<comment type="similarity">
    <text evidence="14">Belongs to the DHHC palmitoyltransferase family.</text>
</comment>
<comment type="sequence caution" evidence="14">
    <conflict type="erroneous initiation">
        <sequence resource="EMBL-CDS" id="BAB15462"/>
    </conflict>
</comment>
<accession>Q9H6R6</accession>
<accession>D3DRB6</accession>
<accession>Q53G45</accession>
<accession>Q96IV7</accession>
<accession>Q9H605</accession>
<dbReference type="EC" id="2.3.1.225" evidence="15"/>
<dbReference type="EC" id="2.3.1.-" evidence="16"/>
<dbReference type="EMBL" id="AF267740">
    <property type="protein sequence ID" value="AAL56663.1"/>
    <property type="molecule type" value="mRNA"/>
</dbReference>
<dbReference type="EMBL" id="AK025605">
    <property type="protein sequence ID" value="BAB15187.1"/>
    <property type="molecule type" value="mRNA"/>
</dbReference>
<dbReference type="EMBL" id="AK026369">
    <property type="protein sequence ID" value="BAB15462.1"/>
    <property type="status" value="ALT_INIT"/>
    <property type="molecule type" value="mRNA"/>
</dbReference>
<dbReference type="EMBL" id="AK223086">
    <property type="protein sequence ID" value="BAD96806.1"/>
    <property type="molecule type" value="mRNA"/>
</dbReference>
<dbReference type="EMBL" id="CH471066">
    <property type="protein sequence ID" value="EAW49526.1"/>
    <property type="molecule type" value="Genomic_DNA"/>
</dbReference>
<dbReference type="EMBL" id="CH471066">
    <property type="protein sequence ID" value="EAW49528.1"/>
    <property type="molecule type" value="Genomic_DNA"/>
</dbReference>
<dbReference type="EMBL" id="BC007213">
    <property type="protein sequence ID" value="AAH07213.1"/>
    <property type="molecule type" value="mRNA"/>
</dbReference>
<dbReference type="EMBL" id="BC017434">
    <property type="protein sequence ID" value="AAH17434.1"/>
    <property type="molecule type" value="mRNA"/>
</dbReference>
<dbReference type="CCDS" id="CCDS7574.1">
    <molecule id="Q9H6R6-1"/>
</dbReference>
<dbReference type="CCDS" id="CCDS76335.1">
    <molecule id="Q9H6R6-2"/>
</dbReference>
<dbReference type="RefSeq" id="NP_001290063.1">
    <molecule id="Q9H6R6-2"/>
    <property type="nucleotide sequence ID" value="NM_001303134.2"/>
</dbReference>
<dbReference type="RefSeq" id="NP_001338011.1">
    <molecule id="Q9H6R6-1"/>
    <property type="nucleotide sequence ID" value="NM_001351082.3"/>
</dbReference>
<dbReference type="RefSeq" id="NP_001338012.1">
    <molecule id="Q9H6R6-1"/>
    <property type="nucleotide sequence ID" value="NM_001351083.2"/>
</dbReference>
<dbReference type="RefSeq" id="NP_001338013.1">
    <molecule id="Q9H6R6-1"/>
    <property type="nucleotide sequence ID" value="NM_001351084.2"/>
</dbReference>
<dbReference type="RefSeq" id="NP_071939.1">
    <molecule id="Q9H6R6-1"/>
    <property type="nucleotide sequence ID" value="NM_022494.3"/>
</dbReference>
<dbReference type="RefSeq" id="XP_005270108.1">
    <property type="nucleotide sequence ID" value="XM_005270051.4"/>
</dbReference>
<dbReference type="RefSeq" id="XP_006718011.1">
    <property type="nucleotide sequence ID" value="XM_006717948.3"/>
</dbReference>
<dbReference type="RefSeq" id="XP_016872050.1">
    <property type="nucleotide sequence ID" value="XM_017016561.1"/>
</dbReference>
<dbReference type="RefSeq" id="XP_016872051.1">
    <molecule id="Q9H6R6-2"/>
    <property type="nucleotide sequence ID" value="XM_017016562.3"/>
</dbReference>
<dbReference type="RefSeq" id="XP_016872052.1">
    <molecule id="Q9H6R6-2"/>
    <property type="nucleotide sequence ID" value="XM_017016563.3"/>
</dbReference>
<dbReference type="RefSeq" id="XP_054222573.1">
    <molecule id="Q9H6R6-2"/>
    <property type="nucleotide sequence ID" value="XM_054366598.1"/>
</dbReference>
<dbReference type="RefSeq" id="XP_054222574.1">
    <molecule id="Q9H6R6-2"/>
    <property type="nucleotide sequence ID" value="XM_054366599.1"/>
</dbReference>
<dbReference type="BioGRID" id="122177">
    <property type="interactions" value="70"/>
</dbReference>
<dbReference type="CORUM" id="Q9H6R6"/>
<dbReference type="FunCoup" id="Q9H6R6">
    <property type="interactions" value="2636"/>
</dbReference>
<dbReference type="IntAct" id="Q9H6R6">
    <property type="interactions" value="51"/>
</dbReference>
<dbReference type="MINT" id="Q9H6R6"/>
<dbReference type="STRING" id="9606.ENSP00000358413"/>
<dbReference type="iPTMnet" id="Q9H6R6"/>
<dbReference type="PhosphoSitePlus" id="Q9H6R6"/>
<dbReference type="SwissPalm" id="Q9H6R6"/>
<dbReference type="BioMuta" id="ZDHHC6"/>
<dbReference type="DMDM" id="28202106"/>
<dbReference type="jPOST" id="Q9H6R6"/>
<dbReference type="MassIVE" id="Q9H6R6"/>
<dbReference type="PaxDb" id="9606-ENSP00000358413"/>
<dbReference type="PeptideAtlas" id="Q9H6R6"/>
<dbReference type="ProteomicsDB" id="81020">
    <molecule id="Q9H6R6-1"/>
</dbReference>
<dbReference type="ProteomicsDB" id="81021">
    <molecule id="Q9H6R6-2"/>
</dbReference>
<dbReference type="Antibodypedia" id="18429">
    <property type="antibodies" value="90 antibodies from 17 providers"/>
</dbReference>
<dbReference type="DNASU" id="64429"/>
<dbReference type="Ensembl" id="ENST00000369404.3">
    <molecule id="Q9H6R6-2"/>
    <property type="protein sequence ID" value="ENSP00000358412.3"/>
    <property type="gene ID" value="ENSG00000023041.12"/>
</dbReference>
<dbReference type="Ensembl" id="ENST00000369405.7">
    <molecule id="Q9H6R6-1"/>
    <property type="protein sequence ID" value="ENSP00000358413.3"/>
    <property type="gene ID" value="ENSG00000023041.12"/>
</dbReference>
<dbReference type="Ensembl" id="ENST00000683895.1">
    <molecule id="Q9H6R6-1"/>
    <property type="protein sequence ID" value="ENSP00000507661.1"/>
    <property type="gene ID" value="ENSG00000023041.12"/>
</dbReference>
<dbReference type="Ensembl" id="ENST00000684507.1">
    <molecule id="Q9H6R6-1"/>
    <property type="protein sequence ID" value="ENSP00000507009.1"/>
    <property type="gene ID" value="ENSG00000023041.12"/>
</dbReference>
<dbReference type="GeneID" id="64429"/>
<dbReference type="KEGG" id="hsa:64429"/>
<dbReference type="MANE-Select" id="ENST00000369405.7">
    <property type="protein sequence ID" value="ENSP00000358413.3"/>
    <property type="RefSeq nucleotide sequence ID" value="NM_022494.3"/>
    <property type="RefSeq protein sequence ID" value="NP_071939.1"/>
</dbReference>
<dbReference type="UCSC" id="uc001kzv.3">
    <molecule id="Q9H6R6-1"/>
    <property type="organism name" value="human"/>
</dbReference>
<dbReference type="AGR" id="HGNC:19160"/>
<dbReference type="CTD" id="64429"/>
<dbReference type="DisGeNET" id="64429"/>
<dbReference type="GeneCards" id="ZDHHC6"/>
<dbReference type="HGNC" id="HGNC:19160">
    <property type="gene designation" value="ZDHHC6"/>
</dbReference>
<dbReference type="HPA" id="ENSG00000023041">
    <property type="expression patterns" value="Low tissue specificity"/>
</dbReference>
<dbReference type="MIM" id="618715">
    <property type="type" value="gene"/>
</dbReference>
<dbReference type="neXtProt" id="NX_Q9H6R6"/>
<dbReference type="OpenTargets" id="ENSG00000023041"/>
<dbReference type="PharmGKB" id="PA38803"/>
<dbReference type="VEuPathDB" id="HostDB:ENSG00000023041"/>
<dbReference type="eggNOG" id="KOG1314">
    <property type="taxonomic scope" value="Eukaryota"/>
</dbReference>
<dbReference type="GeneTree" id="ENSGT00940000155642"/>
<dbReference type="InParanoid" id="Q9H6R6"/>
<dbReference type="OMA" id="GCIHAAI"/>
<dbReference type="OrthoDB" id="331948at2759"/>
<dbReference type="PAN-GO" id="Q9H6R6">
    <property type="GO annotations" value="5 GO annotations based on evolutionary models"/>
</dbReference>
<dbReference type="PhylomeDB" id="Q9H6R6"/>
<dbReference type="TreeFam" id="TF320809"/>
<dbReference type="PathwayCommons" id="Q9H6R6"/>
<dbReference type="SignaLink" id="Q9H6R6"/>
<dbReference type="BioGRID-ORCS" id="64429">
    <property type="hits" value="10 hits in 1158 CRISPR screens"/>
</dbReference>
<dbReference type="ChiTaRS" id="ZDHHC6">
    <property type="organism name" value="human"/>
</dbReference>
<dbReference type="GenomeRNAi" id="64429"/>
<dbReference type="Pharos" id="Q9H6R6">
    <property type="development level" value="Tbio"/>
</dbReference>
<dbReference type="PRO" id="PR:Q9H6R6"/>
<dbReference type="Proteomes" id="UP000005640">
    <property type="component" value="Chromosome 10"/>
</dbReference>
<dbReference type="RNAct" id="Q9H6R6">
    <property type="molecule type" value="protein"/>
</dbReference>
<dbReference type="Bgee" id="ENSG00000023041">
    <property type="expression patterns" value="Expressed in renal glomerulus and 200 other cell types or tissues"/>
</dbReference>
<dbReference type="ExpressionAtlas" id="Q9H6R6">
    <property type="expression patterns" value="baseline and differential"/>
</dbReference>
<dbReference type="GO" id="GO:0005783">
    <property type="term" value="C:endoplasmic reticulum"/>
    <property type="evidence" value="ECO:0000314"/>
    <property type="project" value="UniProtKB"/>
</dbReference>
<dbReference type="GO" id="GO:0005789">
    <property type="term" value="C:endoplasmic reticulum membrane"/>
    <property type="evidence" value="ECO:0007669"/>
    <property type="project" value="UniProtKB-SubCell"/>
</dbReference>
<dbReference type="GO" id="GO:0005794">
    <property type="term" value="C:Golgi apparatus"/>
    <property type="evidence" value="ECO:0000318"/>
    <property type="project" value="GO_Central"/>
</dbReference>
<dbReference type="GO" id="GO:0016409">
    <property type="term" value="F:palmitoyltransferase activity"/>
    <property type="evidence" value="ECO:0000314"/>
    <property type="project" value="UniProtKB"/>
</dbReference>
<dbReference type="GO" id="GO:0019706">
    <property type="term" value="F:protein-cysteine S-palmitoyltransferase activity"/>
    <property type="evidence" value="ECO:0000318"/>
    <property type="project" value="GO_Central"/>
</dbReference>
<dbReference type="GO" id="GO:0140439">
    <property type="term" value="F:protein-cysteine S-stearoyltransferase activity"/>
    <property type="evidence" value="ECO:0000315"/>
    <property type="project" value="UniProtKB"/>
</dbReference>
<dbReference type="GO" id="GO:0010636">
    <property type="term" value="P:positive regulation of mitochondrial fusion"/>
    <property type="evidence" value="ECO:0000315"/>
    <property type="project" value="UniProtKB"/>
</dbReference>
<dbReference type="GO" id="GO:0018345">
    <property type="term" value="P:protein palmitoylation"/>
    <property type="evidence" value="ECO:0000314"/>
    <property type="project" value="UniProtKB"/>
</dbReference>
<dbReference type="GO" id="GO:0140438">
    <property type="term" value="P:protein stearoylation"/>
    <property type="evidence" value="ECO:0000315"/>
    <property type="project" value="UniProtKB"/>
</dbReference>
<dbReference type="GO" id="GO:0006612">
    <property type="term" value="P:protein targeting to membrane"/>
    <property type="evidence" value="ECO:0000318"/>
    <property type="project" value="GO_Central"/>
</dbReference>
<dbReference type="InterPro" id="IPR001594">
    <property type="entry name" value="Palmitoyltrfase_DHHC"/>
</dbReference>
<dbReference type="InterPro" id="IPR039859">
    <property type="entry name" value="PFA4/ZDH16/20/ERF2-like"/>
</dbReference>
<dbReference type="InterPro" id="IPR001452">
    <property type="entry name" value="SH3_domain"/>
</dbReference>
<dbReference type="PANTHER" id="PTHR12246">
    <property type="entry name" value="PALMITOYLTRANSFERASE ZDHHC16"/>
    <property type="match status" value="1"/>
</dbReference>
<dbReference type="Pfam" id="PF01529">
    <property type="entry name" value="DHHC"/>
    <property type="match status" value="1"/>
</dbReference>
<dbReference type="Pfam" id="PF07653">
    <property type="entry name" value="SH3_2"/>
    <property type="match status" value="1"/>
</dbReference>
<dbReference type="PROSITE" id="PS50216">
    <property type="entry name" value="DHHC"/>
    <property type="match status" value="1"/>
</dbReference>
<dbReference type="PROSITE" id="PS50002">
    <property type="entry name" value="SH3"/>
    <property type="match status" value="1"/>
</dbReference>
<reference key="1">
    <citation type="submission" date="2000-05" db="EMBL/GenBank/DDBJ databases">
        <title>H4, a novel protein containing 4 transmembrane domains.</title>
        <authorList>
            <person name="Yang Y.C."/>
            <person name="Chen S.Y."/>
            <person name="Chang M.S."/>
        </authorList>
    </citation>
    <scope>NUCLEOTIDE SEQUENCE [MRNA] (ISOFORM 1)</scope>
</reference>
<reference key="2">
    <citation type="journal article" date="2004" name="Nat. Genet.">
        <title>Complete sequencing and characterization of 21,243 full-length human cDNAs.</title>
        <authorList>
            <person name="Ota T."/>
            <person name="Suzuki Y."/>
            <person name="Nishikawa T."/>
            <person name="Otsuki T."/>
            <person name="Sugiyama T."/>
            <person name="Irie R."/>
            <person name="Wakamatsu A."/>
            <person name="Hayashi K."/>
            <person name="Sato H."/>
            <person name="Nagai K."/>
            <person name="Kimura K."/>
            <person name="Makita H."/>
            <person name="Sekine M."/>
            <person name="Obayashi M."/>
            <person name="Nishi T."/>
            <person name="Shibahara T."/>
            <person name="Tanaka T."/>
            <person name="Ishii S."/>
            <person name="Yamamoto J."/>
            <person name="Saito K."/>
            <person name="Kawai Y."/>
            <person name="Isono Y."/>
            <person name="Nakamura Y."/>
            <person name="Nagahari K."/>
            <person name="Murakami K."/>
            <person name="Yasuda T."/>
            <person name="Iwayanagi T."/>
            <person name="Wagatsuma M."/>
            <person name="Shiratori A."/>
            <person name="Sudo H."/>
            <person name="Hosoiri T."/>
            <person name="Kaku Y."/>
            <person name="Kodaira H."/>
            <person name="Kondo H."/>
            <person name="Sugawara M."/>
            <person name="Takahashi M."/>
            <person name="Kanda K."/>
            <person name="Yokoi T."/>
            <person name="Furuya T."/>
            <person name="Kikkawa E."/>
            <person name="Omura Y."/>
            <person name="Abe K."/>
            <person name="Kamihara K."/>
            <person name="Katsuta N."/>
            <person name="Sato K."/>
            <person name="Tanikawa M."/>
            <person name="Yamazaki M."/>
            <person name="Ninomiya K."/>
            <person name="Ishibashi T."/>
            <person name="Yamashita H."/>
            <person name="Murakawa K."/>
            <person name="Fujimori K."/>
            <person name="Tanai H."/>
            <person name="Kimata M."/>
            <person name="Watanabe M."/>
            <person name="Hiraoka S."/>
            <person name="Chiba Y."/>
            <person name="Ishida S."/>
            <person name="Ono Y."/>
            <person name="Takiguchi S."/>
            <person name="Watanabe S."/>
            <person name="Yosida M."/>
            <person name="Hotuta T."/>
            <person name="Kusano J."/>
            <person name="Kanehori K."/>
            <person name="Takahashi-Fujii A."/>
            <person name="Hara H."/>
            <person name="Tanase T.-O."/>
            <person name="Nomura Y."/>
            <person name="Togiya S."/>
            <person name="Komai F."/>
            <person name="Hara R."/>
            <person name="Takeuchi K."/>
            <person name="Arita M."/>
            <person name="Imose N."/>
            <person name="Musashino K."/>
            <person name="Yuuki H."/>
            <person name="Oshima A."/>
            <person name="Sasaki N."/>
            <person name="Aotsuka S."/>
            <person name="Yoshikawa Y."/>
            <person name="Matsunawa H."/>
            <person name="Ichihara T."/>
            <person name="Shiohata N."/>
            <person name="Sano S."/>
            <person name="Moriya S."/>
            <person name="Momiyama H."/>
            <person name="Satoh N."/>
            <person name="Takami S."/>
            <person name="Terashima Y."/>
            <person name="Suzuki O."/>
            <person name="Nakagawa S."/>
            <person name="Senoh A."/>
            <person name="Mizoguchi H."/>
            <person name="Goto Y."/>
            <person name="Shimizu F."/>
            <person name="Wakebe H."/>
            <person name="Hishigaki H."/>
            <person name="Watanabe T."/>
            <person name="Sugiyama A."/>
            <person name="Takemoto M."/>
            <person name="Kawakami B."/>
            <person name="Yamazaki M."/>
            <person name="Watanabe K."/>
            <person name="Kumagai A."/>
            <person name="Itakura S."/>
            <person name="Fukuzumi Y."/>
            <person name="Fujimori Y."/>
            <person name="Komiyama M."/>
            <person name="Tashiro H."/>
            <person name="Tanigami A."/>
            <person name="Fujiwara T."/>
            <person name="Ono T."/>
            <person name="Yamada K."/>
            <person name="Fujii Y."/>
            <person name="Ozaki K."/>
            <person name="Hirao M."/>
            <person name="Ohmori Y."/>
            <person name="Kawabata A."/>
            <person name="Hikiji T."/>
            <person name="Kobatake N."/>
            <person name="Inagaki H."/>
            <person name="Ikema Y."/>
            <person name="Okamoto S."/>
            <person name="Okitani R."/>
            <person name="Kawakami T."/>
            <person name="Noguchi S."/>
            <person name="Itoh T."/>
            <person name="Shigeta K."/>
            <person name="Senba T."/>
            <person name="Matsumura K."/>
            <person name="Nakajima Y."/>
            <person name="Mizuno T."/>
            <person name="Morinaga M."/>
            <person name="Sasaki M."/>
            <person name="Togashi T."/>
            <person name="Oyama M."/>
            <person name="Hata H."/>
            <person name="Watanabe M."/>
            <person name="Komatsu T."/>
            <person name="Mizushima-Sugano J."/>
            <person name="Satoh T."/>
            <person name="Shirai Y."/>
            <person name="Takahashi Y."/>
            <person name="Nakagawa K."/>
            <person name="Okumura K."/>
            <person name="Nagase T."/>
            <person name="Nomura N."/>
            <person name="Kikuchi H."/>
            <person name="Masuho Y."/>
            <person name="Yamashita R."/>
            <person name="Nakai K."/>
            <person name="Yada T."/>
            <person name="Nakamura Y."/>
            <person name="Ohara O."/>
            <person name="Isogai T."/>
            <person name="Sugano S."/>
        </authorList>
    </citation>
    <scope>NUCLEOTIDE SEQUENCE [LARGE SCALE MRNA] (ISOFORM 1)</scope>
</reference>
<reference key="3">
    <citation type="submission" date="2005-04" db="EMBL/GenBank/DDBJ databases">
        <authorList>
            <person name="Suzuki Y."/>
            <person name="Sugano S."/>
            <person name="Totoki Y."/>
            <person name="Toyoda A."/>
            <person name="Takeda T."/>
            <person name="Sakaki Y."/>
            <person name="Tanaka A."/>
            <person name="Yokoyama S."/>
        </authorList>
    </citation>
    <scope>NUCLEOTIDE SEQUENCE [LARGE SCALE MRNA] (ISOFORM 1)</scope>
</reference>
<reference key="4">
    <citation type="submission" date="2005-09" db="EMBL/GenBank/DDBJ databases">
        <authorList>
            <person name="Mural R.J."/>
            <person name="Istrail S."/>
            <person name="Sutton G.G."/>
            <person name="Florea L."/>
            <person name="Halpern A.L."/>
            <person name="Mobarry C.M."/>
            <person name="Lippert R."/>
            <person name="Walenz B."/>
            <person name="Shatkay H."/>
            <person name="Dew I."/>
            <person name="Miller J.R."/>
            <person name="Flanigan M.J."/>
            <person name="Edwards N.J."/>
            <person name="Bolanos R."/>
            <person name="Fasulo D."/>
            <person name="Halldorsson B.V."/>
            <person name="Hannenhalli S."/>
            <person name="Turner R."/>
            <person name="Yooseph S."/>
            <person name="Lu F."/>
            <person name="Nusskern D.R."/>
            <person name="Shue B.C."/>
            <person name="Zheng X.H."/>
            <person name="Zhong F."/>
            <person name="Delcher A.L."/>
            <person name="Huson D.H."/>
            <person name="Kravitz S.A."/>
            <person name="Mouchard L."/>
            <person name="Reinert K."/>
            <person name="Remington K.A."/>
            <person name="Clark A.G."/>
            <person name="Waterman M.S."/>
            <person name="Eichler E.E."/>
            <person name="Adams M.D."/>
            <person name="Hunkapiller M.W."/>
            <person name="Myers E.W."/>
            <person name="Venter J.C."/>
        </authorList>
    </citation>
    <scope>NUCLEOTIDE SEQUENCE [LARGE SCALE GENOMIC DNA]</scope>
</reference>
<reference key="5">
    <citation type="journal article" date="2004" name="Genome Res.">
        <title>The status, quality, and expansion of the NIH full-length cDNA project: the Mammalian Gene Collection (MGC).</title>
        <authorList>
            <consortium name="The MGC Project Team"/>
        </authorList>
    </citation>
    <scope>NUCLEOTIDE SEQUENCE [LARGE SCALE MRNA] (ISOFORM 2)</scope>
    <source>
        <tissue>Muscle</tissue>
    </source>
</reference>
<reference key="6">
    <citation type="journal article" date="2011" name="J. Biol. Chem.">
        <title>Endoplasmic reticulum localization of DHHC palmitoyltransferases mediated by lysine-based sorting signals.</title>
        <authorList>
            <person name="Gorleku O.A."/>
            <person name="Barns A.M."/>
            <person name="Prescott G.R."/>
            <person name="Greaves J."/>
            <person name="Chamberlain L.H."/>
        </authorList>
    </citation>
    <scope>SUBCELLULAR LOCATION</scope>
    <scope>DOMAIN</scope>
    <scope>MUTAGENESIS OF GLU-409; LYS-410; LYS-411; ASN-412 AND ARG-413</scope>
</reference>
<reference key="7">
    <citation type="journal article" date="2012" name="EMBO J.">
        <title>Palmitoylated calnexin is a key component of the ribosome-translocon complex.</title>
        <authorList>
            <person name="Lakkaraju A.K."/>
            <person name="Abrami L."/>
            <person name="Lemmin T."/>
            <person name="Blaskovic S."/>
            <person name="Kunz B."/>
            <person name="Kihara A."/>
            <person name="Dal Peraro M."/>
            <person name="van der Goot F.G."/>
        </authorList>
    </citation>
    <scope>CATALYTIC ACTIVITY</scope>
    <scope>FUNCTION</scope>
    <scope>SUBCELLULAR LOCATION</scope>
</reference>
<reference key="8">
    <citation type="journal article" date="2012" name="FEBS Lett.">
        <title>RING finger palmitoylation of the endoplasmic reticulum Gp78 E3 ubiquitin ligase.</title>
        <authorList>
            <person name="Fairbank M."/>
            <person name="Huang K."/>
            <person name="El-Husseini A."/>
            <person name="Nabi I.R."/>
        </authorList>
    </citation>
    <scope>FUNCTION</scope>
</reference>
<reference key="9">
    <citation type="journal article" date="2015" name="Nature">
        <title>Regulation of mitochondrial morphology and function by stearoylation of TFR1.</title>
        <authorList>
            <person name="Senyilmaz D."/>
            <person name="Virtue S."/>
            <person name="Xu X."/>
            <person name="Tan C.Y."/>
            <person name="Griffin J.L."/>
            <person name="Miller A.K."/>
            <person name="Vidal-Puig A."/>
            <person name="Teleman A.A."/>
        </authorList>
    </citation>
    <scope>FUNCTION</scope>
    <scope>CATALYTIC ACTIVITY</scope>
</reference>
<reference key="10">
    <citation type="journal article" date="2014" name="Proc. Natl. Acad. Sci. U.S.A.">
        <title>Stable expression and function of the inositol 1,4,5-triphosphate receptor requires palmitoylation by a DHHC6/selenoprotein K complex.</title>
        <authorList>
            <person name="Fredericks G.J."/>
            <person name="Hoffmann F.W."/>
            <person name="Rose A.H."/>
            <person name="Osterheld H.J."/>
            <person name="Hess F.M."/>
            <person name="Mercier F."/>
            <person name="Hoffmann P.R."/>
        </authorList>
    </citation>
    <scope>FUNCTION</scope>
    <scope>INTERACTION WITH SELENOK</scope>
</reference>
<reference key="11">
    <citation type="journal article" date="2017" name="Elife">
        <title>Identification and dynamics of the human ZDHHC16-ZDHHC6 palmitoylation cascade.</title>
        <authorList>
            <person name="Abrami L."/>
            <person name="Dallavilla T."/>
            <person name="Sandoz P.A."/>
            <person name="Demir M."/>
            <person name="Kunz B."/>
            <person name="Savoglidis G."/>
            <person name="Hatzimanikatis V."/>
            <person name="van der Goot F.G."/>
        </authorList>
    </citation>
    <scope>FUNCTION</scope>
    <scope>SUBCELLULAR LOCATION</scope>
    <scope>SUBUNIT</scope>
    <scope>PALMITOYLATION AT CYS-328; CYS-329 AND CYS-343</scope>
    <scope>MUTAGENESIS OF 328-CYS-CYS-329 AND CYS-343</scope>
</reference>
<sequence>MGTFCSVIKFENLQELKRLCHWGPIIALGVIAICSTMAMIDSVLWYWPLHTTGGSVNFIMLINWTVMILYNYFNAMFVGPGFVPLGWKPEISQDTMYLQYCKVCQAYKAPRSHHCRKCNRCVMKMDHHCPWINNCCGYQNHASFTLFLLLAPLGCIHAAFIFVMTMYTQLYHRLSFGWNTVKIDMSAARRDPLPIVPFGLAAFATTLFALGLALGTTIAVGMLFFIQMKIILRNKTSIESWIEEKAKDRIQYYQLDEVFVFPYDMGSRWRNFKQVFTWSGVPEGDGLEWPVREGCHQYSLTIEQLKQKADKRVRSVRYKVIEDYSGACCPLNKGIKTFFTSPCTEEPRIQLQKGEFILATRGLRYWLYGDKILDDSFIEGVSRIRGWFPRKCVEKCPCDAETDQAPEGEKKNR</sequence>
<gene>
    <name evidence="17" type="primary">ZDHHC6</name>
    <name evidence="17" type="synonym">ZNF376</name>
</gene>
<name>ZDHC6_HUMAN</name>
<feature type="chain" id="PRO_0000212871" description="Palmitoyltransferase ZDHHC6">
    <location>
        <begin position="1"/>
        <end position="413"/>
    </location>
</feature>
<feature type="topological domain" description="Cytoplasmic" evidence="14">
    <location>
        <begin position="1"/>
        <end position="24"/>
    </location>
</feature>
<feature type="transmembrane region" description="Helical" evidence="2">
    <location>
        <begin position="25"/>
        <end position="45"/>
    </location>
</feature>
<feature type="topological domain" description="Lumenal" evidence="14">
    <location>
        <begin position="46"/>
        <end position="57"/>
    </location>
</feature>
<feature type="transmembrane region" description="Helical" evidence="2">
    <location>
        <begin position="58"/>
        <end position="78"/>
    </location>
</feature>
<feature type="topological domain" description="Cytoplasmic" evidence="14">
    <location>
        <begin position="79"/>
        <end position="143"/>
    </location>
</feature>
<feature type="transmembrane region" description="Helical" evidence="2">
    <location>
        <begin position="144"/>
        <end position="164"/>
    </location>
</feature>
<feature type="topological domain" description="Lumenal" evidence="14">
    <location>
        <begin position="165"/>
        <end position="205"/>
    </location>
</feature>
<feature type="transmembrane region" description="Helical" evidence="2">
    <location>
        <begin position="206"/>
        <end position="226"/>
    </location>
</feature>
<feature type="topological domain" description="Cytoplasmic" evidence="14">
    <location>
        <begin position="227"/>
        <end position="413"/>
    </location>
</feature>
<feature type="domain" description="DHHC" evidence="3">
    <location>
        <begin position="99"/>
        <end position="149"/>
    </location>
</feature>
<feature type="domain" description="SH3" evidence="4">
    <location>
        <begin position="313"/>
        <end position="398"/>
    </location>
</feature>
<feature type="short sequence motif" description="Di-lysine motif" evidence="5">
    <location>
        <begin position="410"/>
        <end position="413"/>
    </location>
</feature>
<feature type="active site" description="S-palmitoyl cysteine intermediate" evidence="1">
    <location>
        <position position="129"/>
    </location>
</feature>
<feature type="lipid moiety-binding region" description="S-palmitoyl cysteine" evidence="10">
    <location>
        <position position="328"/>
    </location>
</feature>
<feature type="lipid moiety-binding region" description="S-palmitoyl cysteine" evidence="10">
    <location>
        <position position="329"/>
    </location>
</feature>
<feature type="lipid moiety-binding region" description="S-palmitoyl cysteine" evidence="10">
    <location>
        <position position="343"/>
    </location>
</feature>
<feature type="splice variant" id="VSP_006938" description="In isoform 2." evidence="11">
    <location>
        <begin position="90"/>
        <end position="93"/>
    </location>
</feature>
<feature type="sequence variant" id="VAR_052974" description="In dbSNP:rs34350728.">
    <original>D</original>
    <variation>N</variation>
    <location>
        <position position="41"/>
    </location>
</feature>
<feature type="mutagenesis site" description="Abolishes palmitoylation, leading to impaired homooligomeization and decreased catalytic activity; when associated with A-343." evidence="10">
    <original>CC</original>
    <variation>AA</variation>
    <location>
        <begin position="328"/>
        <end position="329"/>
    </location>
</feature>
<feature type="mutagenesis site" description="Abolishes palmitoylation, leading to impaired homooligomeization and decreased catalytic activity; when associated with 328-A-A-329." evidence="10">
    <original>C</original>
    <variation>A</variation>
    <location>
        <position position="343"/>
    </location>
</feature>
<feature type="mutagenesis site" description="Does not affect localization to the endoplasmic reticulum." evidence="5">
    <original>E</original>
    <variation>A</variation>
    <location>
        <position position="409"/>
    </location>
</feature>
<feature type="mutagenesis site" description="Impaired localization to the endoplasmic reticulum." evidence="5">
    <original>K</original>
    <variation>A</variation>
    <location>
        <position position="410"/>
    </location>
</feature>
<feature type="mutagenesis site" description="Impaired localization to the endoplasmic reticulum." evidence="5">
    <original>K</original>
    <variation>A</variation>
    <location>
        <position position="411"/>
    </location>
</feature>
<feature type="mutagenesis site" description="Does not affect localization to the endoplasmic reticulum." evidence="5">
    <original>N</original>
    <variation>A</variation>
    <location>
        <position position="412"/>
    </location>
</feature>
<feature type="mutagenesis site" description="Does not affect localization to the endoplasmic reticulum." evidence="5">
    <original>R</original>
    <variation>A</variation>
    <location>
        <position position="413"/>
    </location>
</feature>
<feature type="sequence conflict" description="In Ref. 3; BAD96806." evidence="14" ref="3">
    <original>N</original>
    <variation>S</variation>
    <location>
        <position position="57"/>
    </location>
</feature>
<feature type="sequence conflict" description="In Ref. 3; BAD96806." evidence="14" ref="3">
    <original>V</original>
    <variation>I</variation>
    <location>
        <position position="66"/>
    </location>
</feature>
<feature type="sequence conflict" description="In Ref. 3; BAD96806." evidence="14" ref="3">
    <original>V</original>
    <variation>A</variation>
    <location>
        <position position="78"/>
    </location>
</feature>
<feature type="sequence conflict" description="In Ref. 2; BAB15462." evidence="14" ref="2">
    <original>P</original>
    <variation>L</variation>
    <location>
        <position position="342"/>
    </location>
</feature>
<feature type="sequence conflict" description="In Ref. 2; BAB15462." evidence="14" ref="2">
    <original>D</original>
    <variation>G</variation>
    <location>
        <position position="370"/>
    </location>
</feature>
<feature type="sequence conflict" description="In Ref. 3; BAD96806." evidence="14" ref="3">
    <original>S</original>
    <variation>P</variation>
    <location>
        <position position="376"/>
    </location>
</feature>
<organism>
    <name type="scientific">Homo sapiens</name>
    <name type="common">Human</name>
    <dbReference type="NCBI Taxonomy" id="9606"/>
    <lineage>
        <taxon>Eukaryota</taxon>
        <taxon>Metazoa</taxon>
        <taxon>Chordata</taxon>
        <taxon>Craniata</taxon>
        <taxon>Vertebrata</taxon>
        <taxon>Euteleostomi</taxon>
        <taxon>Mammalia</taxon>
        <taxon>Eutheria</taxon>
        <taxon>Euarchontoglires</taxon>
        <taxon>Primates</taxon>
        <taxon>Haplorrhini</taxon>
        <taxon>Catarrhini</taxon>
        <taxon>Hominidae</taxon>
        <taxon>Homo</taxon>
    </lineage>
</organism>
<keyword id="KW-0012">Acyltransferase</keyword>
<keyword id="KW-0025">Alternative splicing</keyword>
<keyword id="KW-0256">Endoplasmic reticulum</keyword>
<keyword id="KW-0449">Lipoprotein</keyword>
<keyword id="KW-0472">Membrane</keyword>
<keyword id="KW-0564">Palmitate</keyword>
<keyword id="KW-1267">Proteomics identification</keyword>
<keyword id="KW-1185">Reference proteome</keyword>
<keyword id="KW-0728">SH3 domain</keyword>
<keyword id="KW-0808">Transferase</keyword>
<keyword id="KW-0812">Transmembrane</keyword>
<keyword id="KW-1133">Transmembrane helix</keyword>